<proteinExistence type="evidence at protein level"/>
<reference key="1">
    <citation type="journal article" date="1996" name="Brain Res. Mol. Brain Res.">
        <title>Cloning and expression localization of cDNA for rat homolog of TRP protein, a possible store-operated calcium (Ca2+) channel.</title>
        <authorList>
            <person name="Funayama M."/>
            <person name="Goto K."/>
            <person name="Kondo H."/>
        </authorList>
    </citation>
    <scope>NUCLEOTIDE SEQUENCE [MRNA] (ISOFORM ALPHA)</scope>
    <source>
        <strain>Wistar Imamichi</strain>
        <tissue>Brain</tissue>
    </source>
</reference>
<reference key="2">
    <citation type="submission" date="2001-07" db="EMBL/GenBank/DDBJ databases">
        <authorList>
            <person name="Otsuka Y."/>
            <person name="Kondo H."/>
        </authorList>
    </citation>
    <scope>SEQUENCE REVISION</scope>
</reference>
<reference key="3">
    <citation type="journal article" date="2000" name="J. Biol. Chem.">
        <title>Association of mammalian trp4 and phospholipase C isozymes with a PDZ domain-containing protein, NHERF.</title>
        <authorList>
            <person name="Tang Y."/>
            <person name="Tang J."/>
            <person name="Chen Z."/>
            <person name="Trost C."/>
            <person name="Flockerzi V."/>
            <person name="Li M."/>
            <person name="Ramesh V."/>
            <person name="Zhu M.X."/>
        </authorList>
    </citation>
    <scope>NUCLEOTIDE SEQUENCE [MRNA] (ISOFORMS ALPHA AND BETA)</scope>
    <source>
        <strain>Sprague-Dawley</strain>
    </source>
</reference>
<reference key="4">
    <citation type="journal article" date="2002" name="J. Biol. Chem.">
        <title>Functional differences between TRPC4 splice variants.</title>
        <authorList>
            <person name="Schaefer M."/>
            <person name="Plant T.D."/>
            <person name="Stresow N."/>
            <person name="Albrecht N."/>
            <person name="Schultz G."/>
        </authorList>
    </citation>
    <scope>NUCLEOTIDE SEQUENCE [MRNA] (ISOFORM BETA)</scope>
    <scope>FUNCTION</scope>
    <scope>TRANSPORTER ACTIVITY</scope>
    <source>
        <strain>Wistar</strain>
    </source>
</reference>
<reference key="5">
    <citation type="journal article" date="2003" name="J. Biol. Chem.">
        <title>Formation of novel TRPC channels by complex subunit interactions in embryonic brain.</title>
        <authorList>
            <person name="Strubing C."/>
            <person name="Krapivinsky G."/>
            <person name="Krapivinsky L."/>
            <person name="Clapham D.E."/>
        </authorList>
    </citation>
    <scope>SUBUNIT</scope>
</reference>
<organism>
    <name type="scientific">Rattus norvegicus</name>
    <name type="common">Rat</name>
    <dbReference type="NCBI Taxonomy" id="10116"/>
    <lineage>
        <taxon>Eukaryota</taxon>
        <taxon>Metazoa</taxon>
        <taxon>Chordata</taxon>
        <taxon>Craniata</taxon>
        <taxon>Vertebrata</taxon>
        <taxon>Euteleostomi</taxon>
        <taxon>Mammalia</taxon>
        <taxon>Eutheria</taxon>
        <taxon>Euarchontoglires</taxon>
        <taxon>Glires</taxon>
        <taxon>Rodentia</taxon>
        <taxon>Myomorpha</taxon>
        <taxon>Muroidea</taxon>
        <taxon>Muridae</taxon>
        <taxon>Murinae</taxon>
        <taxon>Rattus</taxon>
    </lineage>
</organism>
<sequence>MAQFYYKRNVNAPYRDRIPLRIVRAESELSPSEKAYLNAVEKGDYASVKKSLEEAEIYFKININCIDPLGRTALLIAIENENLELIELLLSFNVYVGDALLHAIRKEVVGAVELLLNHKKPSGEKQVPPILLDKQFSEFTPDITPIILAAHTNNYEIIKLLVQKGVSVPRPHEVRCNCVECVSSSDVDSLRHSRSRLNIYKALASPSLIALSSEDPFLTAFQLSWELQELSKVENEFKSEYEELSRQCKQFAKDLLDQTRSSRELEIILNYRDDNSLIEEQSGNDLARLKLAIKYRQKEFVAQPNCQQLLASRWYDEFPGWRRRHWAVKMVTCFIIGLLFPVFSVCYLIAPKSPLGLFIRKPFIKFICHTASYLTFLFLLLLASQHIDRSDLNRQGPPPTIVEWMILPWVLGFIWGEIKQMWDGGLQDYIHDWWNLMDFVMNSLYLATISLKIVAFVKYSALNPRESWDMWHPTLVAEALFAIANIFSSLRLISLFTANSHLGPLQISLGRMLLDILKFLFIYCLVLLAFANGLNQLYFYYEETKGLSCKGIRCEKQNNAFSTLFETLQSLFWSIFGLINLYVTNVKAQHEFTDFVGATMFGTYNVISLVVLLNMLIAMMNNSYQLIADHADIEWKFARTKLWMSYFEEGGTLPTPFNVIPSPKSLWYLVKWIWTHLCKKKMRRKPESFGTIGRRAADNLRRHHQYQEVMRNLVKRYVAAMIREAKTEEGLTEENVKELKQDISSFRFEVLGLLRGSKLSTIQSANAASSASSADSDEKSHSEGNGKDKRKNLSLFDLTTLIHPRSAVIASERHNLSNGSALVVQEPPREKQRKVNFVADIKNFGLFHRRSKQNAAEQNANQIFSVSEEITRQQAAGALERNIQLESKGLASRGDRSIPGLNEQCVLVDHRERNTDTLGLQVGKRVCSSFKSEKVVVEDTVPIIPKEKHAQEEDSSIDYDLSPTDTVAHEDYVTTRL</sequence>
<protein>
    <recommendedName>
        <fullName>Short transient receptor potential channel 4</fullName>
        <shortName>Trp4</shortName>
        <shortName>TrpC4</shortName>
    </recommendedName>
    <alternativeName>
        <fullName>Capacitative calcium entry channel 1</fullName>
        <shortName>CCE1</shortName>
    </alternativeName>
</protein>
<name>TRPC4_RAT</name>
<keyword id="KW-0025">Alternative splicing</keyword>
<keyword id="KW-0040">ANK repeat</keyword>
<keyword id="KW-0106">Calcium</keyword>
<keyword id="KW-0107">Calcium channel</keyword>
<keyword id="KW-0109">Calcium transport</keyword>
<keyword id="KW-1003">Cell membrane</keyword>
<keyword id="KW-0175">Coiled coil</keyword>
<keyword id="KW-1015">Disulfide bond</keyword>
<keyword id="KW-0407">Ion channel</keyword>
<keyword id="KW-0406">Ion transport</keyword>
<keyword id="KW-0472">Membrane</keyword>
<keyword id="KW-0479">Metal-binding</keyword>
<keyword id="KW-0597">Phosphoprotein</keyword>
<keyword id="KW-1185">Reference proteome</keyword>
<keyword id="KW-0677">Repeat</keyword>
<keyword id="KW-0812">Transmembrane</keyword>
<keyword id="KW-1133">Transmembrane helix</keyword>
<keyword id="KW-0813">Transport</keyword>
<keyword id="KW-0862">Zinc</keyword>
<feature type="chain" id="PRO_0000215316" description="Short transient receptor potential channel 4">
    <location>
        <begin position="1"/>
        <end position="977"/>
    </location>
</feature>
<feature type="topological domain" description="Cytoplasmic" evidence="2">
    <location>
        <begin position="1"/>
        <end position="324"/>
    </location>
</feature>
<feature type="intramembrane region" description="Discontinuously helical; Name=Pre-S1" evidence="2">
    <location>
        <begin position="325"/>
        <end position="359"/>
    </location>
</feature>
<feature type="topological domain" description="Cytoplasmic" evidence="2">
    <location>
        <begin position="360"/>
        <end position="362"/>
    </location>
</feature>
<feature type="transmembrane region" description="Helical; Name=S1" evidence="2">
    <location>
        <begin position="363"/>
        <end position="383"/>
    </location>
</feature>
<feature type="topological domain" description="Extracellular" evidence="2">
    <location>
        <begin position="384"/>
        <end position="403"/>
    </location>
</feature>
<feature type="transmembrane region" description="Helical; Name=S2" evidence="2">
    <location>
        <begin position="404"/>
        <end position="418"/>
    </location>
</feature>
<feature type="topological domain" description="Cytoplasmic" evidence="2">
    <location>
        <begin position="419"/>
        <end position="432"/>
    </location>
</feature>
<feature type="transmembrane region" description="Helical; Name=S3" evidence="2">
    <location>
        <begin position="433"/>
        <end position="453"/>
    </location>
</feature>
<feature type="topological domain" description="Extracellular" evidence="2">
    <location>
        <begin position="454"/>
        <end position="475"/>
    </location>
</feature>
<feature type="transmembrane region" description="Helical; Name=S4" evidence="2">
    <location>
        <begin position="476"/>
        <end position="498"/>
    </location>
</feature>
<feature type="topological domain" description="Cytoplasmic" evidence="2">
    <location>
        <begin position="499"/>
        <end position="511"/>
    </location>
</feature>
<feature type="transmembrane region" description="Helical; Name=S5" evidence="2">
    <location>
        <begin position="512"/>
        <end position="534"/>
    </location>
</feature>
<feature type="topological domain" description="Extracellular" evidence="2">
    <location>
        <begin position="535"/>
        <end position="599"/>
    </location>
</feature>
<feature type="transmembrane region" description="Helical; Name=S6" evidence="2">
    <location>
        <begin position="600"/>
        <end position="620"/>
    </location>
</feature>
<feature type="topological domain" description="Cytoplasmic" evidence="2">
    <location>
        <begin position="621"/>
        <end position="977"/>
    </location>
</feature>
<feature type="repeat" description="ANK 1" evidence="2">
    <location>
        <begin position="29"/>
        <end position="60"/>
    </location>
</feature>
<feature type="repeat" description="ANK 2" evidence="2">
    <location>
        <begin position="71"/>
        <end position="93"/>
    </location>
</feature>
<feature type="repeat" description="ANK 3" evidence="2">
    <location>
        <begin position="96"/>
        <end position="118"/>
    </location>
</feature>
<feature type="repeat" description="ANK 4" evidence="2">
    <location>
        <begin position="141"/>
        <end position="165"/>
    </location>
</feature>
<feature type="region of interest" description="Interaction with ITPR1, ITPR2 and ITPR3" evidence="2">
    <location>
        <begin position="615"/>
        <end position="977"/>
    </location>
</feature>
<feature type="region of interest" description="Disordered" evidence="4">
    <location>
        <begin position="767"/>
        <end position="790"/>
    </location>
</feature>
<feature type="region of interest" description="PDZ-binding domain" evidence="2">
    <location>
        <begin position="975"/>
        <end position="977"/>
    </location>
</feature>
<feature type="coiled-coil region" evidence="3">
    <location>
        <begin position="223"/>
        <end position="260"/>
    </location>
</feature>
<feature type="compositionally biased region" description="Basic and acidic residues" evidence="4">
    <location>
        <begin position="776"/>
        <end position="787"/>
    </location>
</feature>
<feature type="binding site" evidence="2">
    <location>
        <position position="172"/>
    </location>
    <ligand>
        <name>Zn(2+)</name>
        <dbReference type="ChEBI" id="CHEBI:29105"/>
    </ligand>
</feature>
<feature type="binding site" evidence="2">
    <location>
        <position position="176"/>
    </location>
    <ligand>
        <name>Zn(2+)</name>
        <dbReference type="ChEBI" id="CHEBI:29105"/>
    </ligand>
</feature>
<feature type="binding site" evidence="2">
    <location>
        <position position="178"/>
    </location>
    <ligand>
        <name>Zn(2+)</name>
        <dbReference type="ChEBI" id="CHEBI:29105"/>
    </ligand>
</feature>
<feature type="binding site" evidence="2">
    <location>
        <position position="181"/>
    </location>
    <ligand>
        <name>Zn(2+)</name>
        <dbReference type="ChEBI" id="CHEBI:29105"/>
    </ligand>
</feature>
<feature type="binding site" evidence="2">
    <location>
        <position position="417"/>
    </location>
    <ligand>
        <name>Ca(2+)</name>
        <dbReference type="ChEBI" id="CHEBI:29108"/>
    </ligand>
</feature>
<feature type="binding site" evidence="2">
    <location>
        <position position="420"/>
    </location>
    <ligand>
        <name>Ca(2+)</name>
        <dbReference type="ChEBI" id="CHEBI:29108"/>
    </ligand>
</feature>
<feature type="binding site" evidence="2">
    <location>
        <position position="435"/>
    </location>
    <ligand>
        <name>Ca(2+)</name>
        <dbReference type="ChEBI" id="CHEBI:29108"/>
    </ligand>
</feature>
<feature type="binding site" evidence="2">
    <location>
        <position position="438"/>
    </location>
    <ligand>
        <name>Ca(2+)</name>
        <dbReference type="ChEBI" id="CHEBI:29108"/>
    </ligand>
</feature>
<feature type="modified residue" description="Phosphotyrosine; by FYN" evidence="2">
    <location>
        <position position="959"/>
    </location>
</feature>
<feature type="modified residue" description="Phosphotyrosine; by FYN" evidence="2">
    <location>
        <position position="972"/>
    </location>
</feature>
<feature type="disulfide bond" evidence="2">
    <location>
        <begin position="549"/>
        <end position="554"/>
    </location>
</feature>
<feature type="splice variant" id="VSP_006571" description="In isoform Beta." evidence="7 8">
    <location>
        <begin position="784"/>
        <end position="867"/>
    </location>
</feature>
<feature type="sequence conflict" description="In Ref. 1; BAA23599." evidence="9" ref="1">
    <location>
        <position position="337"/>
    </location>
</feature>
<feature type="sequence conflict" description="In Ref. 1; BAA23599." evidence="9" ref="1">
    <location>
        <begin position="390"/>
        <end position="411"/>
    </location>
</feature>
<feature type="sequence conflict" description="In Ref. 1; BAA23599 and 4; AAL24556." evidence="9" ref="1 4">
    <original>D</original>
    <variation>E</variation>
    <location>
        <position position="594"/>
    </location>
</feature>
<feature type="sequence conflict" description="In Ref. 1; BAA23599 and 4; AAL24556." evidence="9" ref="1 4">
    <original>K</original>
    <variation>Q</variation>
    <location>
        <position position="888"/>
    </location>
</feature>
<accession>O35119</accession>
<accession>Q91ZL9</accession>
<accession>Q9EQ74</accession>
<accession>Q9EQ75</accession>
<comment type="function">
    <molecule>Isoform Alpha</molecule>
    <text evidence="2">Forms a receptor-activated non-selective calcium permeant cation channel (By similarity). Acts as a cell-cell contact-dependent endothelial calcium entry channel (By similarity). Forms a homomeric ion channel or a heteromeric ion channel with TRPC1; the heteromeric ion channel has reduced calcium permeability compared to the homomeric channel (By similarity). Also permeable to monovalent ions including sodium, lithium and cesium ions (By similarity).</text>
</comment>
<comment type="function">
    <molecule>Isoform Beta</molecule>
    <text evidence="5">Forms a non-selective a receptor-activated calcium permeant cation channel. Probably is operated by a phosphatidylinositol second messenger system activated by receptor tyrosine kinases or G-protein coupled receptors.</text>
</comment>
<comment type="catalytic activity">
    <molecule>Isoform Alpha</molecule>
    <reaction evidence="5">
        <text>Ca(2+)(in) = Ca(2+)(out)</text>
        <dbReference type="Rhea" id="RHEA:29671"/>
        <dbReference type="ChEBI" id="CHEBI:29108"/>
    </reaction>
</comment>
<comment type="catalytic activity">
    <molecule>Isoform Beta</molecule>
    <reaction evidence="5">
        <text>Ca(2+)(in) = Ca(2+)(out)</text>
        <dbReference type="Rhea" id="RHEA:29671"/>
        <dbReference type="ChEBI" id="CHEBI:29108"/>
    </reaction>
</comment>
<comment type="catalytic activity">
    <reaction evidence="2">
        <text>Na(+)(in) = Na(+)(out)</text>
        <dbReference type="Rhea" id="RHEA:34963"/>
        <dbReference type="ChEBI" id="CHEBI:29101"/>
    </reaction>
</comment>
<comment type="catalytic activity">
    <reaction evidence="2">
        <text>Li(+)(in) = Li(+)(out)</text>
        <dbReference type="Rhea" id="RHEA:78551"/>
        <dbReference type="ChEBI" id="CHEBI:49713"/>
    </reaction>
</comment>
<comment type="catalytic activity">
    <reaction evidence="2">
        <text>Cs(+)(in) = Cs(+)(out)</text>
        <dbReference type="Rhea" id="RHEA:78555"/>
        <dbReference type="ChEBI" id="CHEBI:49547"/>
    </reaction>
</comment>
<comment type="activity regulation">
    <text evidence="1 5">May be operated by a phosphatidylinositol second messenger system activated by receptor tyrosine kinases or G-protein coupled receptors (PubMed:11713258). May be activated by intracellular calcium store depletion (By similarity).</text>
</comment>
<comment type="subunit">
    <text evidence="1 2 6">Homotetramer (PubMed:12857742). Heterotetramer with TRPC1 and/or TRPC5 (PubMed:12857742). Forms a heteromeric ion channel with TRPC1, with a 1:3 TRPC1:TRPC4 stoichiometry (By similarity). Interacts with TRPC4AP (By similarity). Isoform alpha but not isoform beta interacts with ITPR1, ITPR2 and ITPR3 (By similarity). Interacts with NHERF1 (By similarity). Interacts with MX1 and RNF24 (By similarity). Interacts (via CIRB domain) with SESTD1 (via the spectrin 1 repeat) and SPTBN5 (via C-terminus) (By similarity). Interacts with CDH5 and CTNNB1 (By similarity). Interacts (via protein 4.1-binding domain) with EPB41L2 (By similarity). Interacts with PLSCR1 (By similarity).</text>
</comment>
<comment type="subcellular location">
    <molecule>Isoform Alpha</molecule>
    <subcellularLocation>
        <location evidence="5">Cell membrane</location>
        <topology evidence="2">Multi-pass membrane protein</topology>
    </subcellularLocation>
</comment>
<comment type="subcellular location">
    <molecule>Isoform Beta</molecule>
    <subcellularLocation>
        <location evidence="5">Cell membrane</location>
        <topology evidence="2">Multi-pass membrane protein</topology>
    </subcellularLocation>
</comment>
<comment type="alternative products">
    <event type="alternative splicing"/>
    <isoform>
        <id>O35119-1</id>
        <name>Alpha</name>
        <sequence type="displayed"/>
    </isoform>
    <isoform>
        <id>O35119-2</id>
        <name>Beta</name>
        <sequence type="described" ref="VSP_006571"/>
    </isoform>
</comment>
<comment type="similarity">
    <text evidence="9">Belongs to the transient receptor (TC 1.A.4) family. STrpC subfamily. TRPC4 sub-subfamily.</text>
</comment>
<comment type="sequence caution" evidence="9">
    <conflict type="frameshift">
        <sequence resource="EMBL-CDS" id="BAA23599"/>
    </conflict>
</comment>
<dbReference type="EMBL" id="AB008889">
    <property type="protein sequence ID" value="BAA23599.2"/>
    <property type="status" value="ALT_FRAME"/>
    <property type="molecule type" value="mRNA"/>
</dbReference>
<dbReference type="EMBL" id="AF288407">
    <property type="protein sequence ID" value="AAG21809.1"/>
    <property type="molecule type" value="mRNA"/>
</dbReference>
<dbReference type="EMBL" id="AF288408">
    <property type="protein sequence ID" value="AAG21810.1"/>
    <property type="molecule type" value="mRNA"/>
</dbReference>
<dbReference type="EMBL" id="AF421365">
    <property type="protein sequence ID" value="AAL24556.1"/>
    <property type="molecule type" value="mRNA"/>
</dbReference>
<dbReference type="SMR" id="O35119"/>
<dbReference type="FunCoup" id="O35119">
    <property type="interactions" value="545"/>
</dbReference>
<dbReference type="STRING" id="10116.ENSRNOP00000042886"/>
<dbReference type="PhosphoSitePlus" id="O35119"/>
<dbReference type="PaxDb" id="10116-ENSRNOP00000042886"/>
<dbReference type="UCSC" id="RGD:621276">
    <molecule id="O35119-1"/>
    <property type="organism name" value="rat"/>
</dbReference>
<dbReference type="AGR" id="RGD:621276"/>
<dbReference type="RGD" id="621276">
    <property type="gene designation" value="Trpc4"/>
</dbReference>
<dbReference type="eggNOG" id="KOG3609">
    <property type="taxonomic scope" value="Eukaryota"/>
</dbReference>
<dbReference type="InParanoid" id="O35119"/>
<dbReference type="PhylomeDB" id="O35119"/>
<dbReference type="Reactome" id="R-RNO-3295583">
    <property type="pathway name" value="TRP channels"/>
</dbReference>
<dbReference type="PRO" id="PR:O35119"/>
<dbReference type="Proteomes" id="UP000002494">
    <property type="component" value="Unplaced"/>
</dbReference>
<dbReference type="GO" id="GO:0016323">
    <property type="term" value="C:basolateral plasma membrane"/>
    <property type="evidence" value="ECO:0000266"/>
    <property type="project" value="RGD"/>
</dbReference>
<dbReference type="GO" id="GO:0034704">
    <property type="term" value="C:calcium channel complex"/>
    <property type="evidence" value="ECO:0000266"/>
    <property type="project" value="RGD"/>
</dbReference>
<dbReference type="GO" id="GO:0034703">
    <property type="term" value="C:cation channel complex"/>
    <property type="evidence" value="ECO:0000318"/>
    <property type="project" value="GO_Central"/>
</dbReference>
<dbReference type="GO" id="GO:0005901">
    <property type="term" value="C:caveola"/>
    <property type="evidence" value="ECO:0000266"/>
    <property type="project" value="RGD"/>
</dbReference>
<dbReference type="GO" id="GO:0009986">
    <property type="term" value="C:cell surface"/>
    <property type="evidence" value="ECO:0000266"/>
    <property type="project" value="RGD"/>
</dbReference>
<dbReference type="GO" id="GO:0005911">
    <property type="term" value="C:cell-cell junction"/>
    <property type="evidence" value="ECO:0000266"/>
    <property type="project" value="RGD"/>
</dbReference>
<dbReference type="GO" id="GO:0030863">
    <property type="term" value="C:cortical cytoskeleton"/>
    <property type="evidence" value="ECO:0000266"/>
    <property type="project" value="RGD"/>
</dbReference>
<dbReference type="GO" id="GO:0045121">
    <property type="term" value="C:membrane raft"/>
    <property type="evidence" value="ECO:0000266"/>
    <property type="project" value="RGD"/>
</dbReference>
<dbReference type="GO" id="GO:0005886">
    <property type="term" value="C:plasma membrane"/>
    <property type="evidence" value="ECO:0000314"/>
    <property type="project" value="UniProtKB"/>
</dbReference>
<dbReference type="GO" id="GO:0032991">
    <property type="term" value="C:protein-containing complex"/>
    <property type="evidence" value="ECO:0000266"/>
    <property type="project" value="RGD"/>
</dbReference>
<dbReference type="GO" id="GO:0008013">
    <property type="term" value="F:beta-catenin binding"/>
    <property type="evidence" value="ECO:0000266"/>
    <property type="project" value="RGD"/>
</dbReference>
<dbReference type="GO" id="GO:0045296">
    <property type="term" value="F:cadherin binding"/>
    <property type="evidence" value="ECO:0000266"/>
    <property type="project" value="RGD"/>
</dbReference>
<dbReference type="GO" id="GO:0005262">
    <property type="term" value="F:calcium channel activity"/>
    <property type="evidence" value="ECO:0000314"/>
    <property type="project" value="UniProtKB"/>
</dbReference>
<dbReference type="GO" id="GO:0070679">
    <property type="term" value="F:inositol 1,4,5 trisphosphate binding"/>
    <property type="evidence" value="ECO:0000266"/>
    <property type="project" value="RGD"/>
</dbReference>
<dbReference type="GO" id="GO:0015279">
    <property type="term" value="F:store-operated calcium channel activity"/>
    <property type="evidence" value="ECO:0000250"/>
    <property type="project" value="UniProtKB"/>
</dbReference>
<dbReference type="GO" id="GO:0070509">
    <property type="term" value="P:calcium ion import"/>
    <property type="evidence" value="ECO:0000266"/>
    <property type="project" value="RGD"/>
</dbReference>
<dbReference type="GO" id="GO:0070588">
    <property type="term" value="P:calcium ion transmembrane transport"/>
    <property type="evidence" value="ECO:0000318"/>
    <property type="project" value="GO_Central"/>
</dbReference>
<dbReference type="GO" id="GO:0006816">
    <property type="term" value="P:calcium ion transport"/>
    <property type="evidence" value="ECO:0000314"/>
    <property type="project" value="RGD"/>
</dbReference>
<dbReference type="GO" id="GO:0014051">
    <property type="term" value="P:gamma-aminobutyric acid secretion"/>
    <property type="evidence" value="ECO:0000266"/>
    <property type="project" value="RGD"/>
</dbReference>
<dbReference type="GO" id="GO:0048709">
    <property type="term" value="P:oligodendrocyte differentiation"/>
    <property type="evidence" value="ECO:0000266"/>
    <property type="project" value="RGD"/>
</dbReference>
<dbReference type="GO" id="GO:0106129">
    <property type="term" value="P:positive regulation of store-operated calcium entry"/>
    <property type="evidence" value="ECO:0000315"/>
    <property type="project" value="RGD"/>
</dbReference>
<dbReference type="GO" id="GO:0099605">
    <property type="term" value="P:regulation of action potential firing rate"/>
    <property type="evidence" value="ECO:0000315"/>
    <property type="project" value="RGD"/>
</dbReference>
<dbReference type="GO" id="GO:0051924">
    <property type="term" value="P:regulation of calcium ion transport"/>
    <property type="evidence" value="ECO:0000315"/>
    <property type="project" value="RGD"/>
</dbReference>
<dbReference type="GO" id="GO:0051480">
    <property type="term" value="P:regulation of cytosolic calcium ion concentration"/>
    <property type="evidence" value="ECO:0000318"/>
    <property type="project" value="GO_Central"/>
</dbReference>
<dbReference type="FunFam" id="1.25.40.20:FF:000023">
    <property type="entry name" value="short transient receptor potential channel 4 isoform X1"/>
    <property type="match status" value="1"/>
</dbReference>
<dbReference type="FunFam" id="1.10.287.70:FF:000266">
    <property type="entry name" value="Transient receptor potential cation channel subfamily c member 1"/>
    <property type="match status" value="1"/>
</dbReference>
<dbReference type="Gene3D" id="1.25.40.20">
    <property type="entry name" value="Ankyrin repeat-containing domain"/>
    <property type="match status" value="1"/>
</dbReference>
<dbReference type="InterPro" id="IPR002110">
    <property type="entry name" value="Ankyrin_rpt"/>
</dbReference>
<dbReference type="InterPro" id="IPR036770">
    <property type="entry name" value="Ankyrin_rpt-contain_sf"/>
</dbReference>
<dbReference type="InterPro" id="IPR005821">
    <property type="entry name" value="Ion_trans_dom"/>
</dbReference>
<dbReference type="InterPro" id="IPR013555">
    <property type="entry name" value="TRP_dom"/>
</dbReference>
<dbReference type="InterPro" id="IPR005460">
    <property type="entry name" value="TRPC4_channel"/>
</dbReference>
<dbReference type="InterPro" id="IPR002153">
    <property type="entry name" value="TRPC_channel"/>
</dbReference>
<dbReference type="NCBIfam" id="TIGR00870">
    <property type="entry name" value="trp"/>
    <property type="match status" value="1"/>
</dbReference>
<dbReference type="PANTHER" id="PTHR10117:SF25">
    <property type="entry name" value="SHORT TRANSIENT RECEPTOR POTENTIAL CHANNEL 4"/>
    <property type="match status" value="1"/>
</dbReference>
<dbReference type="PANTHER" id="PTHR10117">
    <property type="entry name" value="TRANSIENT RECEPTOR POTENTIAL CHANNEL"/>
    <property type="match status" value="1"/>
</dbReference>
<dbReference type="Pfam" id="PF00023">
    <property type="entry name" value="Ank"/>
    <property type="match status" value="1"/>
</dbReference>
<dbReference type="Pfam" id="PF12796">
    <property type="entry name" value="Ank_2"/>
    <property type="match status" value="1"/>
</dbReference>
<dbReference type="Pfam" id="PF00520">
    <property type="entry name" value="Ion_trans"/>
    <property type="match status" value="1"/>
</dbReference>
<dbReference type="Pfam" id="PF08344">
    <property type="entry name" value="TRP_2"/>
    <property type="match status" value="1"/>
</dbReference>
<dbReference type="PRINTS" id="PR01097">
    <property type="entry name" value="TRNSRECEPTRP"/>
</dbReference>
<dbReference type="PRINTS" id="PR01645">
    <property type="entry name" value="TRPCHANNEL4"/>
</dbReference>
<dbReference type="SMART" id="SM00248">
    <property type="entry name" value="ANK"/>
    <property type="match status" value="2"/>
</dbReference>
<dbReference type="SMART" id="SM01420">
    <property type="entry name" value="TRP_2"/>
    <property type="match status" value="1"/>
</dbReference>
<dbReference type="SUPFAM" id="SSF48403">
    <property type="entry name" value="Ankyrin repeat"/>
    <property type="match status" value="1"/>
</dbReference>
<dbReference type="PROSITE" id="PS50297">
    <property type="entry name" value="ANK_REP_REGION"/>
    <property type="match status" value="1"/>
</dbReference>
<dbReference type="PROSITE" id="PS50088">
    <property type="entry name" value="ANK_REPEAT"/>
    <property type="match status" value="1"/>
</dbReference>
<gene>
    <name type="primary">Trpc4</name>
</gene>
<evidence type="ECO:0000250" key="1">
    <source>
        <dbReference type="UniProtKB" id="Q9QUQ5"/>
    </source>
</evidence>
<evidence type="ECO:0000250" key="2">
    <source>
        <dbReference type="UniProtKB" id="Q9UBN4"/>
    </source>
</evidence>
<evidence type="ECO:0000255" key="3"/>
<evidence type="ECO:0000256" key="4">
    <source>
        <dbReference type="SAM" id="MobiDB-lite"/>
    </source>
</evidence>
<evidence type="ECO:0000269" key="5">
    <source>
    </source>
</evidence>
<evidence type="ECO:0000269" key="6">
    <source>
    </source>
</evidence>
<evidence type="ECO:0000303" key="7">
    <source>
    </source>
</evidence>
<evidence type="ECO:0000303" key="8">
    <source>
    </source>
</evidence>
<evidence type="ECO:0000305" key="9"/>